<sequence length="421" mass="44888">MDKLIITGGVRLDGEIRISGAKNSALPILAATLLGDEPVTICNLPHLHDITTMIELFGRMGVEPVIDEKLSVEVDARSIKTLVAPYELVKTMRASILVLGPMVARFGEAEVALPGGCAIGSRPVDLHIRGLEAMGAQIDVEGGYIKAKAPEGGLRGAHFFFDVVSVTGTENIMMAATLAKGRSVLENAAREPEVVDLANCLIAMGAKIQGAGTDTIIIDGVERLHGARFNVMPDRIETGTYLVAAAVTGGRVKVKDADPSTLEAVLAKLQEAGAEITTGPDWIELDMKGKRPKAVNLRTAPYPAFPTDMQAQFIALNAVAEGTGTVIETVFENRFMHVYEMLRMGANILVEGNTAIVTGVEKLKGAPVMATDLRASASLVLAALMAEGDTLIDRIYHIDRGYECIEEKLQLLGAKIRRVPG</sequence>
<gene>
    <name evidence="1" type="primary">murA</name>
    <name type="ordered locus">Pmen_0882</name>
</gene>
<reference key="1">
    <citation type="submission" date="2007-04" db="EMBL/GenBank/DDBJ databases">
        <title>Complete sequence of Pseudomonas mendocina ymp.</title>
        <authorList>
            <consortium name="US DOE Joint Genome Institute"/>
            <person name="Copeland A."/>
            <person name="Lucas S."/>
            <person name="Lapidus A."/>
            <person name="Barry K."/>
            <person name="Glavina del Rio T."/>
            <person name="Dalin E."/>
            <person name="Tice H."/>
            <person name="Pitluck S."/>
            <person name="Kiss H."/>
            <person name="Brettin T."/>
            <person name="Detter J.C."/>
            <person name="Bruce D."/>
            <person name="Han C."/>
            <person name="Schmutz J."/>
            <person name="Larimer F."/>
            <person name="Land M."/>
            <person name="Hauser L."/>
            <person name="Kyrpides N."/>
            <person name="Mikhailova N."/>
            <person name="Hersman L."/>
            <person name="Dubois J."/>
            <person name="Maurice P."/>
            <person name="Richardson P."/>
        </authorList>
    </citation>
    <scope>NUCLEOTIDE SEQUENCE [LARGE SCALE GENOMIC DNA]</scope>
    <source>
        <strain>ymp</strain>
    </source>
</reference>
<protein>
    <recommendedName>
        <fullName evidence="1">UDP-N-acetylglucosamine 1-carboxyvinyltransferase</fullName>
        <ecNumber evidence="1">2.5.1.7</ecNumber>
    </recommendedName>
    <alternativeName>
        <fullName evidence="1">Enoylpyruvate transferase</fullName>
    </alternativeName>
    <alternativeName>
        <fullName evidence="1">UDP-N-acetylglucosamine enolpyruvyl transferase</fullName>
        <shortName evidence="1">EPT</shortName>
    </alternativeName>
</protein>
<evidence type="ECO:0000255" key="1">
    <source>
        <dbReference type="HAMAP-Rule" id="MF_00111"/>
    </source>
</evidence>
<organism>
    <name type="scientific">Ectopseudomonas mendocina (strain ymp)</name>
    <name type="common">Pseudomonas mendocina</name>
    <dbReference type="NCBI Taxonomy" id="399739"/>
    <lineage>
        <taxon>Bacteria</taxon>
        <taxon>Pseudomonadati</taxon>
        <taxon>Pseudomonadota</taxon>
        <taxon>Gammaproteobacteria</taxon>
        <taxon>Pseudomonadales</taxon>
        <taxon>Pseudomonadaceae</taxon>
        <taxon>Ectopseudomonas</taxon>
    </lineage>
</organism>
<keyword id="KW-0131">Cell cycle</keyword>
<keyword id="KW-0132">Cell division</keyword>
<keyword id="KW-0133">Cell shape</keyword>
<keyword id="KW-0961">Cell wall biogenesis/degradation</keyword>
<keyword id="KW-0963">Cytoplasm</keyword>
<keyword id="KW-0573">Peptidoglycan synthesis</keyword>
<keyword id="KW-0670">Pyruvate</keyword>
<keyword id="KW-0808">Transferase</keyword>
<proteinExistence type="inferred from homology"/>
<comment type="function">
    <text evidence="1">Cell wall formation. Adds enolpyruvyl to UDP-N-acetylglucosamine.</text>
</comment>
<comment type="catalytic activity">
    <reaction evidence="1">
        <text>phosphoenolpyruvate + UDP-N-acetyl-alpha-D-glucosamine = UDP-N-acetyl-3-O-(1-carboxyvinyl)-alpha-D-glucosamine + phosphate</text>
        <dbReference type="Rhea" id="RHEA:18681"/>
        <dbReference type="ChEBI" id="CHEBI:43474"/>
        <dbReference type="ChEBI" id="CHEBI:57705"/>
        <dbReference type="ChEBI" id="CHEBI:58702"/>
        <dbReference type="ChEBI" id="CHEBI:68483"/>
        <dbReference type="EC" id="2.5.1.7"/>
    </reaction>
</comment>
<comment type="pathway">
    <text evidence="1">Cell wall biogenesis; peptidoglycan biosynthesis.</text>
</comment>
<comment type="subcellular location">
    <subcellularLocation>
        <location evidence="1">Cytoplasm</location>
    </subcellularLocation>
</comment>
<comment type="similarity">
    <text evidence="1">Belongs to the EPSP synthase family. MurA subfamily.</text>
</comment>
<feature type="chain" id="PRO_1000023074" description="UDP-N-acetylglucosamine 1-carboxyvinyltransferase">
    <location>
        <begin position="1"/>
        <end position="421"/>
    </location>
</feature>
<feature type="active site" description="Proton donor" evidence="1">
    <location>
        <position position="117"/>
    </location>
</feature>
<feature type="binding site" evidence="1">
    <location>
        <begin position="22"/>
        <end position="23"/>
    </location>
    <ligand>
        <name>phosphoenolpyruvate</name>
        <dbReference type="ChEBI" id="CHEBI:58702"/>
    </ligand>
</feature>
<feature type="binding site" evidence="1">
    <location>
        <position position="93"/>
    </location>
    <ligand>
        <name>UDP-N-acetyl-alpha-D-glucosamine</name>
        <dbReference type="ChEBI" id="CHEBI:57705"/>
    </ligand>
</feature>
<feature type="binding site" evidence="1">
    <location>
        <begin position="122"/>
        <end position="126"/>
    </location>
    <ligand>
        <name>UDP-N-acetyl-alpha-D-glucosamine</name>
        <dbReference type="ChEBI" id="CHEBI:57705"/>
    </ligand>
</feature>
<feature type="binding site" evidence="1">
    <location>
        <position position="308"/>
    </location>
    <ligand>
        <name>UDP-N-acetyl-alpha-D-glucosamine</name>
        <dbReference type="ChEBI" id="CHEBI:57705"/>
    </ligand>
</feature>
<feature type="binding site" evidence="1">
    <location>
        <position position="330"/>
    </location>
    <ligand>
        <name>UDP-N-acetyl-alpha-D-glucosamine</name>
        <dbReference type="ChEBI" id="CHEBI:57705"/>
    </ligand>
</feature>
<feature type="modified residue" description="2-(S-cysteinyl)pyruvic acid O-phosphothioketal" evidence="1">
    <location>
        <position position="117"/>
    </location>
</feature>
<name>MURA_ECTM1</name>
<accession>A4XQN4</accession>
<dbReference type="EC" id="2.5.1.7" evidence="1"/>
<dbReference type="EMBL" id="CP000680">
    <property type="protein sequence ID" value="ABP83650.1"/>
    <property type="molecule type" value="Genomic_DNA"/>
</dbReference>
<dbReference type="SMR" id="A4XQN4"/>
<dbReference type="STRING" id="399739.Pmen_0882"/>
<dbReference type="KEGG" id="pmy:Pmen_0882"/>
<dbReference type="PATRIC" id="fig|399739.8.peg.891"/>
<dbReference type="eggNOG" id="COG0766">
    <property type="taxonomic scope" value="Bacteria"/>
</dbReference>
<dbReference type="HOGENOM" id="CLU_027387_0_0_6"/>
<dbReference type="OrthoDB" id="9803760at2"/>
<dbReference type="UniPathway" id="UPA00219"/>
<dbReference type="GO" id="GO:0005737">
    <property type="term" value="C:cytoplasm"/>
    <property type="evidence" value="ECO:0007669"/>
    <property type="project" value="UniProtKB-SubCell"/>
</dbReference>
<dbReference type="GO" id="GO:0008760">
    <property type="term" value="F:UDP-N-acetylglucosamine 1-carboxyvinyltransferase activity"/>
    <property type="evidence" value="ECO:0007669"/>
    <property type="project" value="UniProtKB-UniRule"/>
</dbReference>
<dbReference type="GO" id="GO:0051301">
    <property type="term" value="P:cell division"/>
    <property type="evidence" value="ECO:0007669"/>
    <property type="project" value="UniProtKB-KW"/>
</dbReference>
<dbReference type="GO" id="GO:0071555">
    <property type="term" value="P:cell wall organization"/>
    <property type="evidence" value="ECO:0007669"/>
    <property type="project" value="UniProtKB-KW"/>
</dbReference>
<dbReference type="GO" id="GO:0009252">
    <property type="term" value="P:peptidoglycan biosynthetic process"/>
    <property type="evidence" value="ECO:0007669"/>
    <property type="project" value="UniProtKB-UniRule"/>
</dbReference>
<dbReference type="GO" id="GO:0008360">
    <property type="term" value="P:regulation of cell shape"/>
    <property type="evidence" value="ECO:0007669"/>
    <property type="project" value="UniProtKB-KW"/>
</dbReference>
<dbReference type="GO" id="GO:0019277">
    <property type="term" value="P:UDP-N-acetylgalactosamine biosynthetic process"/>
    <property type="evidence" value="ECO:0007669"/>
    <property type="project" value="InterPro"/>
</dbReference>
<dbReference type="CDD" id="cd01555">
    <property type="entry name" value="UdpNAET"/>
    <property type="match status" value="1"/>
</dbReference>
<dbReference type="FunFam" id="3.65.10.10:FF:000001">
    <property type="entry name" value="UDP-N-acetylglucosamine 1-carboxyvinyltransferase"/>
    <property type="match status" value="1"/>
</dbReference>
<dbReference type="FunFam" id="3.65.10.10:FF:000002">
    <property type="entry name" value="UDP-N-acetylglucosamine 1-carboxyvinyltransferase"/>
    <property type="match status" value="1"/>
</dbReference>
<dbReference type="Gene3D" id="3.65.10.10">
    <property type="entry name" value="Enolpyruvate transferase domain"/>
    <property type="match status" value="2"/>
</dbReference>
<dbReference type="HAMAP" id="MF_00111">
    <property type="entry name" value="MurA"/>
    <property type="match status" value="1"/>
</dbReference>
<dbReference type="InterPro" id="IPR001986">
    <property type="entry name" value="Enolpyruvate_Tfrase_dom"/>
</dbReference>
<dbReference type="InterPro" id="IPR036968">
    <property type="entry name" value="Enolpyruvate_Tfrase_sf"/>
</dbReference>
<dbReference type="InterPro" id="IPR050068">
    <property type="entry name" value="MurA_subfamily"/>
</dbReference>
<dbReference type="InterPro" id="IPR013792">
    <property type="entry name" value="RNA3'P_cycl/enolpyr_Trfase_a/b"/>
</dbReference>
<dbReference type="InterPro" id="IPR005750">
    <property type="entry name" value="UDP_GlcNAc_COvinyl_MurA"/>
</dbReference>
<dbReference type="NCBIfam" id="TIGR01072">
    <property type="entry name" value="murA"/>
    <property type="match status" value="1"/>
</dbReference>
<dbReference type="NCBIfam" id="NF006873">
    <property type="entry name" value="PRK09369.1"/>
    <property type="match status" value="1"/>
</dbReference>
<dbReference type="PANTHER" id="PTHR43783">
    <property type="entry name" value="UDP-N-ACETYLGLUCOSAMINE 1-CARBOXYVINYLTRANSFERASE"/>
    <property type="match status" value="1"/>
</dbReference>
<dbReference type="PANTHER" id="PTHR43783:SF1">
    <property type="entry name" value="UDP-N-ACETYLGLUCOSAMINE 1-CARBOXYVINYLTRANSFERASE"/>
    <property type="match status" value="1"/>
</dbReference>
<dbReference type="Pfam" id="PF00275">
    <property type="entry name" value="EPSP_synthase"/>
    <property type="match status" value="1"/>
</dbReference>
<dbReference type="SUPFAM" id="SSF55205">
    <property type="entry name" value="EPT/RTPC-like"/>
    <property type="match status" value="1"/>
</dbReference>